<accession>Q7TX80</accession>
<accession>A0A1R3Y373</accession>
<accession>X2BMN5</accession>
<protein>
    <recommendedName>
        <fullName>Putative thiosulfate sulfurtransferase 2</fullName>
        <ecNumber>2.8.1.1</ecNumber>
    </recommendedName>
    <alternativeName>
        <fullName>Rhodanese-like protein 2</fullName>
    </alternativeName>
</protein>
<organism>
    <name type="scientific">Mycobacterium bovis (strain ATCC BAA-935 / AF2122/97)</name>
    <dbReference type="NCBI Taxonomy" id="233413"/>
    <lineage>
        <taxon>Bacteria</taxon>
        <taxon>Bacillati</taxon>
        <taxon>Actinomycetota</taxon>
        <taxon>Actinomycetes</taxon>
        <taxon>Mycobacteriales</taxon>
        <taxon>Mycobacteriaceae</taxon>
        <taxon>Mycobacterium</taxon>
        <taxon>Mycobacterium tuberculosis complex</taxon>
    </lineage>
</organism>
<name>THTR2_MYCBO</name>
<dbReference type="EC" id="2.8.1.1"/>
<dbReference type="EMBL" id="LT708304">
    <property type="protein sequence ID" value="SIU01770.1"/>
    <property type="molecule type" value="Genomic_DNA"/>
</dbReference>
<dbReference type="RefSeq" id="NP_856789.1">
    <property type="nucleotide sequence ID" value="NC_002945.3"/>
</dbReference>
<dbReference type="SMR" id="Q7TX80"/>
<dbReference type="KEGG" id="mbo:BQ2027_MB3144"/>
<dbReference type="PATRIC" id="fig|233413.5.peg.3456"/>
<dbReference type="Proteomes" id="UP000001419">
    <property type="component" value="Chromosome"/>
</dbReference>
<dbReference type="GO" id="GO:0020037">
    <property type="term" value="F:heme binding"/>
    <property type="evidence" value="ECO:0007669"/>
    <property type="project" value="InterPro"/>
</dbReference>
<dbReference type="GO" id="GO:0005506">
    <property type="term" value="F:iron ion binding"/>
    <property type="evidence" value="ECO:0007669"/>
    <property type="project" value="InterPro"/>
</dbReference>
<dbReference type="GO" id="GO:0004497">
    <property type="term" value="F:monooxygenase activity"/>
    <property type="evidence" value="ECO:0007669"/>
    <property type="project" value="InterPro"/>
</dbReference>
<dbReference type="GO" id="GO:0016705">
    <property type="term" value="F:oxidoreductase activity, acting on paired donors, with incorporation or reduction of molecular oxygen"/>
    <property type="evidence" value="ECO:0007669"/>
    <property type="project" value="InterPro"/>
</dbReference>
<dbReference type="GO" id="GO:0004792">
    <property type="term" value="F:thiosulfate-cyanide sulfurtransferase activity"/>
    <property type="evidence" value="ECO:0007669"/>
    <property type="project" value="UniProtKB-EC"/>
</dbReference>
<dbReference type="CDD" id="cd01448">
    <property type="entry name" value="TST_Repeat_1"/>
    <property type="match status" value="1"/>
</dbReference>
<dbReference type="CDD" id="cd01449">
    <property type="entry name" value="TST_Repeat_2"/>
    <property type="match status" value="1"/>
</dbReference>
<dbReference type="Gene3D" id="3.40.250.10">
    <property type="entry name" value="Rhodanese-like domain"/>
    <property type="match status" value="2"/>
</dbReference>
<dbReference type="InterPro" id="IPR017972">
    <property type="entry name" value="Cyt_P450_CS"/>
</dbReference>
<dbReference type="InterPro" id="IPR036396">
    <property type="entry name" value="Cyt_P450_sf"/>
</dbReference>
<dbReference type="InterPro" id="IPR001763">
    <property type="entry name" value="Rhodanese-like_dom"/>
</dbReference>
<dbReference type="InterPro" id="IPR036873">
    <property type="entry name" value="Rhodanese-like_dom_sf"/>
</dbReference>
<dbReference type="InterPro" id="IPR051126">
    <property type="entry name" value="Thiosulfate_sulfurtransferase"/>
</dbReference>
<dbReference type="PANTHER" id="PTHR43855">
    <property type="entry name" value="THIOSULFATE SULFURTRANSFERASE"/>
    <property type="match status" value="1"/>
</dbReference>
<dbReference type="PANTHER" id="PTHR43855:SF1">
    <property type="entry name" value="THIOSULFATE SULFURTRANSFERASE"/>
    <property type="match status" value="1"/>
</dbReference>
<dbReference type="Pfam" id="PF00581">
    <property type="entry name" value="Rhodanese"/>
    <property type="match status" value="2"/>
</dbReference>
<dbReference type="SMART" id="SM00450">
    <property type="entry name" value="RHOD"/>
    <property type="match status" value="2"/>
</dbReference>
<dbReference type="SUPFAM" id="SSF48264">
    <property type="entry name" value="Cytochrome P450"/>
    <property type="match status" value="1"/>
</dbReference>
<dbReference type="SUPFAM" id="SSF52821">
    <property type="entry name" value="Rhodanese/Cell cycle control phosphatase"/>
    <property type="match status" value="2"/>
</dbReference>
<dbReference type="PROSITE" id="PS50206">
    <property type="entry name" value="RHODANESE_3"/>
    <property type="match status" value="2"/>
</dbReference>
<proteinExistence type="inferred from homology"/>
<keyword id="KW-1185">Reference proteome</keyword>
<keyword id="KW-0677">Repeat</keyword>
<keyword id="KW-0808">Transferase</keyword>
<feature type="chain" id="PRO_0000139413" description="Putative thiosulfate sulfurtransferase 2">
    <location>
        <begin position="1"/>
        <end position="320"/>
    </location>
</feature>
<feature type="domain" description="Rhodanese 1" evidence="2">
    <location>
        <begin position="18"/>
        <end position="125"/>
    </location>
</feature>
<feature type="domain" description="Rhodanese 2" evidence="2">
    <location>
        <begin position="154"/>
        <end position="267"/>
    </location>
</feature>
<feature type="active site" description="Cysteine persulfide intermediate" evidence="2">
    <location>
        <position position="233"/>
    </location>
</feature>
<feature type="binding site" evidence="1">
    <location>
        <position position="238"/>
    </location>
    <ligand>
        <name>substrate</name>
    </ligand>
</feature>
<comment type="function">
    <text evidence="1">May be a sulfotransferase involved in the formation of thiosulfate.</text>
</comment>
<comment type="catalytic activity">
    <reaction>
        <text>thiosulfate + hydrogen cyanide = thiocyanate + sulfite + 2 H(+)</text>
        <dbReference type="Rhea" id="RHEA:16881"/>
        <dbReference type="ChEBI" id="CHEBI:15378"/>
        <dbReference type="ChEBI" id="CHEBI:17359"/>
        <dbReference type="ChEBI" id="CHEBI:18022"/>
        <dbReference type="ChEBI" id="CHEBI:18407"/>
        <dbReference type="ChEBI" id="CHEBI:33542"/>
        <dbReference type="EC" id="2.8.1.1"/>
    </reaction>
</comment>
<comment type="domain">
    <text evidence="1">Contains two rhodanese domains with different primary structures but with near identical secondary structure conformations suggesting a common evolutionary origin. Only the C-terminal rhodanese domain contains the catalytic cysteine residue (By similarity).</text>
</comment>
<reference key="1">
    <citation type="journal article" date="2003" name="Proc. Natl. Acad. Sci. U.S.A.">
        <title>The complete genome sequence of Mycobacterium bovis.</title>
        <authorList>
            <person name="Garnier T."/>
            <person name="Eiglmeier K."/>
            <person name="Camus J.-C."/>
            <person name="Medina N."/>
            <person name="Mansoor H."/>
            <person name="Pryor M."/>
            <person name="Duthoy S."/>
            <person name="Grondin S."/>
            <person name="Lacroix C."/>
            <person name="Monsempe C."/>
            <person name="Simon S."/>
            <person name="Harris B."/>
            <person name="Atkin R."/>
            <person name="Doggett J."/>
            <person name="Mayes R."/>
            <person name="Keating L."/>
            <person name="Wheeler P.R."/>
            <person name="Parkhill J."/>
            <person name="Barrell B.G."/>
            <person name="Cole S.T."/>
            <person name="Gordon S.V."/>
            <person name="Hewinson R.G."/>
        </authorList>
    </citation>
    <scope>NUCLEOTIDE SEQUENCE [LARGE SCALE GENOMIC DNA]</scope>
    <source>
        <strain>ATCC BAA-935 / AF2122/97</strain>
    </source>
</reference>
<reference key="2">
    <citation type="journal article" date="2017" name="Genome Announc.">
        <title>Updated reference genome sequence and annotation of Mycobacterium bovis AF2122/97.</title>
        <authorList>
            <person name="Malone K.M."/>
            <person name="Farrell D."/>
            <person name="Stuber T.P."/>
            <person name="Schubert O.T."/>
            <person name="Aebersold R."/>
            <person name="Robbe-Austerman S."/>
            <person name="Gordon S.V."/>
        </authorList>
    </citation>
    <scope>NUCLEOTIDE SEQUENCE [LARGE SCALE GENOMIC DNA]</scope>
    <scope>GENOME REANNOTATION</scope>
    <source>
        <strain>ATCC BAA-935 / AF2122/97</strain>
    </source>
</reference>
<evidence type="ECO:0000250" key="1"/>
<evidence type="ECO:0000255" key="2">
    <source>
        <dbReference type="PROSITE-ProRule" id="PRU00173"/>
    </source>
</evidence>
<sequence>MARCDVLVSADWAESNLHAPKVVFVEVDEDTSAYDRDHIAGAIKLDWRTDLQDPVKRDFVDAQQFSKLLSERGIANEDTVILYGGNNNWFAAYAYWYFKLYGHEKVKLLDGGRKKWELDGRPLSSDPVSRPVTSYTASPPDNTIRAFRDEVLAAINVKNLIDVRSPDEFSGKILAPAHLPQEQSQRPGHIPGAINVPWSRAANEDGTFKSDEELAKLYADAGLDNSKETIAYCRIGERSSHTWFVLRELLGHQNVNIAFGYGPHACPASAYSRMCLTTFFTSLTQRFPQLQLARPFEDLERRGKGLHSVGIKELLVTWPT</sequence>
<gene>
    <name type="primary">cysA2</name>
    <name type="ordered locus">BQ2027_MB3144</name>
</gene>